<sequence length="359" mass="42070">MTLESMMACCLSDEVKESKRINAEIEKQLRRDKRDARRELKLLLLGTGESGKSTFIKQMRIIHGAGYSEEDKRGFTKLVYQNIFTAMQAMIRAMETLKILYKYEQNKANALLIREVDVEKVTTFEHRYVSAIKTLWNDPGIQECYDRRREYQLSDSAKYYLTDVDRIATSGYLPTQQDVLRVRVPTTGIIEYPFDLENIIFRMVDVGGQRSERRKWIHCFENVTSIMFLVALSEYDQVLVESDNENRMEESKALFRTIVTYPWFQNSSVILFLNKKDLLEDKILHSHLVDYFPEFDGPQRDAQAAREFILKMFVDLNPDSDKIIYSHFTCATDTENIRFVFAAVKDTILQLNLKEYNLV</sequence>
<feature type="chain" id="PRO_0000203744" description="Guanine nucleotide-binding protein subunit alpha-11">
    <location>
        <begin position="1"/>
        <end position="359"/>
    </location>
</feature>
<feature type="domain" description="G-alpha" evidence="5">
    <location>
        <begin position="38"/>
        <end position="359"/>
    </location>
</feature>
<feature type="region of interest" description="G1 motif" evidence="5">
    <location>
        <begin position="41"/>
        <end position="54"/>
    </location>
</feature>
<feature type="region of interest" description="G2 motif" evidence="5">
    <location>
        <begin position="178"/>
        <end position="186"/>
    </location>
</feature>
<feature type="region of interest" description="G3 motif" evidence="5">
    <location>
        <begin position="201"/>
        <end position="210"/>
    </location>
</feature>
<feature type="region of interest" description="G4 motif" evidence="5">
    <location>
        <begin position="270"/>
        <end position="277"/>
    </location>
</feature>
<feature type="region of interest" description="G5 motif" evidence="5">
    <location>
        <begin position="329"/>
        <end position="334"/>
    </location>
</feature>
<feature type="binding site" evidence="3">
    <location>
        <begin position="46"/>
        <end position="53"/>
    </location>
    <ligand>
        <name>GTP</name>
        <dbReference type="ChEBI" id="CHEBI:37565"/>
    </ligand>
</feature>
<feature type="binding site" evidence="2">
    <location>
        <position position="53"/>
    </location>
    <ligand>
        <name>Mg(2+)</name>
        <dbReference type="ChEBI" id="CHEBI:18420"/>
    </ligand>
</feature>
<feature type="binding site" evidence="2">
    <location>
        <begin position="180"/>
        <end position="183"/>
    </location>
    <ligand>
        <name>GTP</name>
        <dbReference type="ChEBI" id="CHEBI:37565"/>
    </ligand>
</feature>
<feature type="binding site" evidence="2">
    <location>
        <position position="186"/>
    </location>
    <ligand>
        <name>Mg(2+)</name>
        <dbReference type="ChEBI" id="CHEBI:18420"/>
    </ligand>
</feature>
<feature type="binding site" evidence="2">
    <location>
        <begin position="274"/>
        <end position="277"/>
    </location>
    <ligand>
        <name>GTP</name>
        <dbReference type="ChEBI" id="CHEBI:37565"/>
    </ligand>
</feature>
<feature type="binding site" evidence="2">
    <location>
        <position position="331"/>
    </location>
    <ligand>
        <name>GTP</name>
        <dbReference type="ChEBI" id="CHEBI:37565"/>
    </ligand>
</feature>
<feature type="lipid moiety-binding region" description="S-palmitoyl cysteine" evidence="3">
    <location>
        <position position="9"/>
    </location>
</feature>
<feature type="lipid moiety-binding region" description="S-palmitoyl cysteine" evidence="3">
    <location>
        <position position="10"/>
    </location>
</feature>
<keyword id="KW-1003">Cell membrane</keyword>
<keyword id="KW-0963">Cytoplasm</keyword>
<keyword id="KW-0342">GTP-binding</keyword>
<keyword id="KW-0378">Hydrolase</keyword>
<keyword id="KW-0449">Lipoprotein</keyword>
<keyword id="KW-0460">Magnesium</keyword>
<keyword id="KW-0472">Membrane</keyword>
<keyword id="KW-0479">Metal-binding</keyword>
<keyword id="KW-0547">Nucleotide-binding</keyword>
<keyword id="KW-0564">Palmitate</keyword>
<keyword id="KW-1185">Reference proteome</keyword>
<keyword id="KW-0807">Transducer</keyword>
<gene>
    <name type="primary">GNA11</name>
</gene>
<accession>P38409</accession>
<accession>Q2TA47</accession>
<organism>
    <name type="scientific">Bos taurus</name>
    <name type="common">Bovine</name>
    <dbReference type="NCBI Taxonomy" id="9913"/>
    <lineage>
        <taxon>Eukaryota</taxon>
        <taxon>Metazoa</taxon>
        <taxon>Chordata</taxon>
        <taxon>Craniata</taxon>
        <taxon>Vertebrata</taxon>
        <taxon>Euteleostomi</taxon>
        <taxon>Mammalia</taxon>
        <taxon>Eutheria</taxon>
        <taxon>Laurasiatheria</taxon>
        <taxon>Artiodactyla</taxon>
        <taxon>Ruminantia</taxon>
        <taxon>Pecora</taxon>
        <taxon>Bovidae</taxon>
        <taxon>Bovinae</taxon>
        <taxon>Bos</taxon>
    </lineage>
</organism>
<name>GNA11_BOVIN</name>
<dbReference type="EMBL" id="D90336">
    <property type="protein sequence ID" value="BAA14350.1"/>
    <property type="status" value="ALT_INIT"/>
    <property type="molecule type" value="mRNA"/>
</dbReference>
<dbReference type="EMBL" id="BC111118">
    <property type="protein sequence ID" value="AAI11119.2"/>
    <property type="status" value="ALT_INIT"/>
    <property type="molecule type" value="mRNA"/>
</dbReference>
<dbReference type="PIR" id="B40891">
    <property type="entry name" value="B40891"/>
</dbReference>
<dbReference type="RefSeq" id="NP_776747.2">
    <property type="nucleotide sequence ID" value="NM_174322.5"/>
</dbReference>
<dbReference type="SMR" id="P38409"/>
<dbReference type="BioGRID" id="159102">
    <property type="interactions" value="1"/>
</dbReference>
<dbReference type="FunCoup" id="P38409">
    <property type="interactions" value="2299"/>
</dbReference>
<dbReference type="STRING" id="9913.ENSBTAP00000050620"/>
<dbReference type="SwissPalm" id="P38409"/>
<dbReference type="PaxDb" id="9913-ENSBTAP00000050620"/>
<dbReference type="Ensembl" id="ENSBTAT00000085254.2">
    <property type="protein sequence ID" value="ENSBTAP00000074164.1"/>
    <property type="gene ID" value="ENSBTAG00000012181.7"/>
</dbReference>
<dbReference type="GeneID" id="281788"/>
<dbReference type="KEGG" id="bta:281788"/>
<dbReference type="CTD" id="2767"/>
<dbReference type="VEuPathDB" id="HostDB:ENSBTAG00000012181"/>
<dbReference type="VGNC" id="VGNC:29444">
    <property type="gene designation" value="GNA11"/>
</dbReference>
<dbReference type="eggNOG" id="KOG0085">
    <property type="taxonomic scope" value="Eukaryota"/>
</dbReference>
<dbReference type="GeneTree" id="ENSGT00940000161033"/>
<dbReference type="HOGENOM" id="CLU_014184_6_0_1"/>
<dbReference type="InParanoid" id="P38409"/>
<dbReference type="OMA" id="GNCISQM"/>
<dbReference type="OrthoDB" id="5817230at2759"/>
<dbReference type="TreeFam" id="TF300673"/>
<dbReference type="Reactome" id="R-BTA-112043">
    <property type="pathway name" value="PLC beta mediated events"/>
</dbReference>
<dbReference type="Reactome" id="R-BTA-202040">
    <property type="pathway name" value="G-protein activation"/>
</dbReference>
<dbReference type="Reactome" id="R-BTA-399997">
    <property type="pathway name" value="Acetylcholine regulates insulin secretion"/>
</dbReference>
<dbReference type="Reactome" id="R-BTA-416476">
    <property type="pathway name" value="G alpha (q) signalling events"/>
</dbReference>
<dbReference type="Reactome" id="R-BTA-418592">
    <property type="pathway name" value="ADP signalling through P2Y purinoceptor 1"/>
</dbReference>
<dbReference type="Reactome" id="R-BTA-428930">
    <property type="pathway name" value="Thromboxane signalling through TP receptor"/>
</dbReference>
<dbReference type="Reactome" id="R-BTA-434316">
    <property type="pathway name" value="Fatty Acids bound to GPR40 (FFAR1) regulate insulin secretion"/>
</dbReference>
<dbReference type="Reactome" id="R-BTA-456926">
    <property type="pathway name" value="Thrombin signalling through proteinase activated receptors (PARs)"/>
</dbReference>
<dbReference type="Reactome" id="R-BTA-6814122">
    <property type="pathway name" value="Cooperation of PDCL (PhLP1) and TRiC/CCT in G-protein beta folding"/>
</dbReference>
<dbReference type="Reactome" id="R-BTA-9856530">
    <property type="pathway name" value="High laminar flow shear stress activates signaling by PIEZO1 and PECAM1:CDH5:KDR in endothelial cells"/>
</dbReference>
<dbReference type="Reactome" id="R-BTA-9860927">
    <property type="pathway name" value="Turbulent (oscillatory, disturbed) flow shear stress activates signaling by PIEZO1 and integrins in endothelial cells"/>
</dbReference>
<dbReference type="Proteomes" id="UP000009136">
    <property type="component" value="Chromosome 7"/>
</dbReference>
<dbReference type="Bgee" id="ENSBTAG00000012181">
    <property type="expression patterns" value="Expressed in jejunum and 106 other cell types or tissues"/>
</dbReference>
<dbReference type="GO" id="GO:0005737">
    <property type="term" value="C:cytoplasm"/>
    <property type="evidence" value="ECO:0000250"/>
    <property type="project" value="UniProtKB"/>
</dbReference>
<dbReference type="GO" id="GO:0005834">
    <property type="term" value="C:heterotrimeric G-protein complex"/>
    <property type="evidence" value="ECO:0000318"/>
    <property type="project" value="GO_Central"/>
</dbReference>
<dbReference type="GO" id="GO:0016020">
    <property type="term" value="C:membrane"/>
    <property type="evidence" value="ECO:0000250"/>
    <property type="project" value="AgBase"/>
</dbReference>
<dbReference type="GO" id="GO:0001750">
    <property type="term" value="C:photoreceptor outer segment"/>
    <property type="evidence" value="ECO:0000250"/>
    <property type="project" value="AgBase"/>
</dbReference>
<dbReference type="GO" id="GO:0005886">
    <property type="term" value="C:plasma membrane"/>
    <property type="evidence" value="ECO:0000304"/>
    <property type="project" value="Reactome"/>
</dbReference>
<dbReference type="GO" id="GO:0045202">
    <property type="term" value="C:synapse"/>
    <property type="evidence" value="ECO:0007669"/>
    <property type="project" value="GOC"/>
</dbReference>
<dbReference type="GO" id="GO:0030234">
    <property type="term" value="F:enzyme regulator activity"/>
    <property type="evidence" value="ECO:0007669"/>
    <property type="project" value="Ensembl"/>
</dbReference>
<dbReference type="GO" id="GO:0003925">
    <property type="term" value="F:G protein activity"/>
    <property type="evidence" value="ECO:0007669"/>
    <property type="project" value="Ensembl"/>
</dbReference>
<dbReference type="GO" id="GO:0001664">
    <property type="term" value="F:G protein-coupled receptor binding"/>
    <property type="evidence" value="ECO:0000318"/>
    <property type="project" value="GO_Central"/>
</dbReference>
<dbReference type="GO" id="GO:0031683">
    <property type="term" value="F:G-protein beta/gamma-subunit complex binding"/>
    <property type="evidence" value="ECO:0000318"/>
    <property type="project" value="GO_Central"/>
</dbReference>
<dbReference type="GO" id="GO:0005525">
    <property type="term" value="F:GTP binding"/>
    <property type="evidence" value="ECO:0007669"/>
    <property type="project" value="UniProtKB-KW"/>
</dbReference>
<dbReference type="GO" id="GO:0003924">
    <property type="term" value="F:GTPase activity"/>
    <property type="evidence" value="ECO:0000318"/>
    <property type="project" value="GO_Central"/>
</dbReference>
<dbReference type="GO" id="GO:0046872">
    <property type="term" value="F:metal ion binding"/>
    <property type="evidence" value="ECO:0007669"/>
    <property type="project" value="UniProtKB-KW"/>
</dbReference>
<dbReference type="GO" id="GO:0001508">
    <property type="term" value="P:action potential"/>
    <property type="evidence" value="ECO:0000318"/>
    <property type="project" value="GO_Central"/>
</dbReference>
<dbReference type="GO" id="GO:0007188">
    <property type="term" value="P:adenylate cyclase-modulating G protein-coupled receptor signaling pathway"/>
    <property type="evidence" value="ECO:0000318"/>
    <property type="project" value="GO_Central"/>
</dbReference>
<dbReference type="GO" id="GO:0071467">
    <property type="term" value="P:cellular response to pH"/>
    <property type="evidence" value="ECO:0007669"/>
    <property type="project" value="Ensembl"/>
</dbReference>
<dbReference type="GO" id="GO:1904888">
    <property type="term" value="P:cranial skeletal system development"/>
    <property type="evidence" value="ECO:0007669"/>
    <property type="project" value="Ensembl"/>
</dbReference>
<dbReference type="GO" id="GO:0048066">
    <property type="term" value="P:developmental pigmentation"/>
    <property type="evidence" value="ECO:0007669"/>
    <property type="project" value="Ensembl"/>
</dbReference>
<dbReference type="GO" id="GO:0086100">
    <property type="term" value="P:endothelin receptor signaling pathway"/>
    <property type="evidence" value="ECO:0007669"/>
    <property type="project" value="Ensembl"/>
</dbReference>
<dbReference type="GO" id="GO:0009649">
    <property type="term" value="P:entrainment of circadian clock"/>
    <property type="evidence" value="ECO:0000250"/>
    <property type="project" value="AgBase"/>
</dbReference>
<dbReference type="GO" id="GO:0007213">
    <property type="term" value="P:G protein-coupled acetylcholine receptor signaling pathway"/>
    <property type="evidence" value="ECO:0000250"/>
    <property type="project" value="AgBase"/>
</dbReference>
<dbReference type="GO" id="GO:0007507">
    <property type="term" value="P:heart development"/>
    <property type="evidence" value="ECO:0007669"/>
    <property type="project" value="Ensembl"/>
</dbReference>
<dbReference type="GO" id="GO:1990806">
    <property type="term" value="P:ligand-gated ion channel signaling pathway"/>
    <property type="evidence" value="ECO:0007669"/>
    <property type="project" value="Ensembl"/>
</dbReference>
<dbReference type="GO" id="GO:0060158">
    <property type="term" value="P:phospholipase C-activating dopamine receptor signaling pathway"/>
    <property type="evidence" value="ECO:0000318"/>
    <property type="project" value="GO_Central"/>
</dbReference>
<dbReference type="GO" id="GO:0007207">
    <property type="term" value="P:phospholipase C-activating G protein-coupled acetylcholine receptor signaling pathway"/>
    <property type="evidence" value="ECO:0007669"/>
    <property type="project" value="Ensembl"/>
</dbReference>
<dbReference type="GO" id="GO:0007603">
    <property type="term" value="P:phototransduction, visible light"/>
    <property type="evidence" value="ECO:0000250"/>
    <property type="project" value="AgBase"/>
</dbReference>
<dbReference type="GO" id="GO:0032024">
    <property type="term" value="P:positive regulation of insulin secretion"/>
    <property type="evidence" value="ECO:0007669"/>
    <property type="project" value="Ensembl"/>
</dbReference>
<dbReference type="GO" id="GO:0008217">
    <property type="term" value="P:regulation of blood pressure"/>
    <property type="evidence" value="ECO:0007669"/>
    <property type="project" value="Ensembl"/>
</dbReference>
<dbReference type="GO" id="GO:0045634">
    <property type="term" value="P:regulation of melanocyte differentiation"/>
    <property type="evidence" value="ECO:0007669"/>
    <property type="project" value="Ensembl"/>
</dbReference>
<dbReference type="GO" id="GO:0001501">
    <property type="term" value="P:skeletal system development"/>
    <property type="evidence" value="ECO:0007669"/>
    <property type="project" value="Ensembl"/>
</dbReference>
<dbReference type="CDD" id="cd00066">
    <property type="entry name" value="G-alpha"/>
    <property type="match status" value="1"/>
</dbReference>
<dbReference type="FunFam" id="3.40.50.300:FF:003977">
    <property type="entry name" value="Guanine nucleotide-binding protein G(q) subunit alpha"/>
    <property type="match status" value="1"/>
</dbReference>
<dbReference type="FunFam" id="1.10.400.10:FF:000002">
    <property type="entry name" value="guanine nucleotide-binding protein G(Q) subunit alpha"/>
    <property type="match status" value="1"/>
</dbReference>
<dbReference type="FunFam" id="3.40.50.300:FF:000692">
    <property type="entry name" value="Guanine nucleotide-binding protein subunit alpha"/>
    <property type="match status" value="1"/>
</dbReference>
<dbReference type="Gene3D" id="1.10.400.10">
    <property type="entry name" value="GI Alpha 1, domain 2-like"/>
    <property type="match status" value="1"/>
</dbReference>
<dbReference type="Gene3D" id="3.40.50.300">
    <property type="entry name" value="P-loop containing nucleotide triphosphate hydrolases"/>
    <property type="match status" value="1"/>
</dbReference>
<dbReference type="InterPro" id="IPR000654">
    <property type="entry name" value="Gprotein_alpha_Q"/>
</dbReference>
<dbReference type="InterPro" id="IPR001019">
    <property type="entry name" value="Gprotein_alpha_su"/>
</dbReference>
<dbReference type="InterPro" id="IPR011025">
    <property type="entry name" value="GproteinA_insert"/>
</dbReference>
<dbReference type="InterPro" id="IPR027417">
    <property type="entry name" value="P-loop_NTPase"/>
</dbReference>
<dbReference type="PANTHER" id="PTHR10218">
    <property type="entry name" value="GTP-BINDING PROTEIN ALPHA SUBUNIT"/>
    <property type="match status" value="1"/>
</dbReference>
<dbReference type="PANTHER" id="PTHR10218:SF328">
    <property type="entry name" value="GUANINE NUCLEOTIDE-BINDING PROTEIN SUBUNIT ALPHA-11"/>
    <property type="match status" value="1"/>
</dbReference>
<dbReference type="Pfam" id="PF00503">
    <property type="entry name" value="G-alpha"/>
    <property type="match status" value="1"/>
</dbReference>
<dbReference type="PRINTS" id="PR00318">
    <property type="entry name" value="GPROTEINA"/>
</dbReference>
<dbReference type="PRINTS" id="PR00442">
    <property type="entry name" value="GPROTEINAQ"/>
</dbReference>
<dbReference type="SMART" id="SM00275">
    <property type="entry name" value="G_alpha"/>
    <property type="match status" value="1"/>
</dbReference>
<dbReference type="SUPFAM" id="SSF52540">
    <property type="entry name" value="P-loop containing nucleoside triphosphate hydrolases"/>
    <property type="match status" value="1"/>
</dbReference>
<dbReference type="SUPFAM" id="SSF47895">
    <property type="entry name" value="Transducin (alpha subunit), insertion domain"/>
    <property type="match status" value="1"/>
</dbReference>
<dbReference type="PROSITE" id="PS51882">
    <property type="entry name" value="G_ALPHA"/>
    <property type="match status" value="1"/>
</dbReference>
<comment type="function">
    <text evidence="1 3">Guanine nucleotide-binding proteins (G proteins) function as transducers downstream of G protein-coupled receptors (GPCRs) in numerous signaling cascades. The alpha chain contains the guanine nucleotide binding site and alternates between an active, GTP-bound state and an inactive, GDP-bound state. Signaling by an activated GPCR promotes GDP release and GTP binding. The alpha subunit has a low GTPase activity that converts bound GTP to GDP, thereby terminating the signal. Both GDP release and GTP hydrolysis are modulated by numerous regulatory proteins. Signaling is mediated via phospholipase C-beta-dependent inositol lipid hydrolysis for signal propagation: activates phospholipase C-beta: following GPCR activation, GNA11 activates PLC-beta (PLCB1, PLCB2, PLCB3 or PLCB4), leading to production of diacylglycerol (DAG) and inositol 1,4,5-trisphosphate (IP3). Transduces FFAR4 signaling in response to long-chain fatty acids (LCFAs) (By similarity). Together with GNAQ, required for heart development (By similarity). In the respiratory epithelium, transmits OXGR1-dependent signals that lead to downstream intracellular Ca(2+) release and mucocilliary clearance of airborne pathogens.</text>
</comment>
<comment type="catalytic activity">
    <reaction evidence="4">
        <text>GTP + H2O = GDP + phosphate + H(+)</text>
        <dbReference type="Rhea" id="RHEA:19669"/>
        <dbReference type="ChEBI" id="CHEBI:15377"/>
        <dbReference type="ChEBI" id="CHEBI:15378"/>
        <dbReference type="ChEBI" id="CHEBI:37565"/>
        <dbReference type="ChEBI" id="CHEBI:43474"/>
        <dbReference type="ChEBI" id="CHEBI:58189"/>
    </reaction>
    <physiologicalReaction direction="left-to-right" evidence="4">
        <dbReference type="Rhea" id="RHEA:19670"/>
    </physiologicalReaction>
</comment>
<comment type="subunit">
    <text evidence="3">G proteins are composed of 3 units; alpha, beta and gamma. The alpha chain contains the guanine nucleotide binding site. Interacts with RGS22. Interacts with NTSR1.</text>
</comment>
<comment type="subcellular location">
    <subcellularLocation>
        <location evidence="3">Cell membrane</location>
        <topology evidence="3">Lipid-anchor</topology>
    </subcellularLocation>
    <subcellularLocation>
        <location evidence="3">Cytoplasm</location>
    </subcellularLocation>
</comment>
<comment type="similarity">
    <text evidence="6">Belongs to the G-alpha family. G(q) subfamily.</text>
</comment>
<comment type="sequence caution" evidence="6">
    <conflict type="erroneous initiation">
        <sequence resource="EMBL-CDS" id="AAI11119"/>
    </conflict>
</comment>
<comment type="sequence caution" evidence="6">
    <conflict type="erroneous initiation">
        <sequence resource="EMBL-CDS" id="BAA14350"/>
    </conflict>
</comment>
<proteinExistence type="evidence at transcript level"/>
<evidence type="ECO:0000250" key="1">
    <source>
        <dbReference type="UniProtKB" id="P21278"/>
    </source>
</evidence>
<evidence type="ECO:0000250" key="2">
    <source>
        <dbReference type="UniProtKB" id="P27600"/>
    </source>
</evidence>
<evidence type="ECO:0000250" key="3">
    <source>
        <dbReference type="UniProtKB" id="P29992"/>
    </source>
</evidence>
<evidence type="ECO:0000250" key="4">
    <source>
        <dbReference type="UniProtKB" id="P50148"/>
    </source>
</evidence>
<evidence type="ECO:0000255" key="5">
    <source>
        <dbReference type="PROSITE-ProRule" id="PRU01230"/>
    </source>
</evidence>
<evidence type="ECO:0000305" key="6"/>
<reference key="1">
    <citation type="journal article" date="1991" name="J. Biol. Chem.">
        <title>Identification of two novel GTP-binding protein alpha-subunits that lack apparent ADP-ribosylation sites for pertussis toxin.</title>
        <authorList>
            <person name="Nakamura F."/>
            <person name="Ogata K."/>
            <person name="Shiozaki K."/>
            <person name="Kameyama K."/>
            <person name="Ohara K."/>
            <person name="Haga T."/>
            <person name="Nukada T."/>
        </authorList>
    </citation>
    <scope>NUCLEOTIDE SEQUENCE [MRNA]</scope>
    <source>
        <tissue>Liver</tissue>
    </source>
</reference>
<reference key="2">
    <citation type="submission" date="2007-03" db="EMBL/GenBank/DDBJ databases">
        <authorList>
            <consortium name="NIH - Mammalian Gene Collection (MGC) project"/>
        </authorList>
    </citation>
    <scope>NUCLEOTIDE SEQUENCE [LARGE SCALE MRNA]</scope>
    <source>
        <strain>Crossbred X Angus</strain>
        <tissue>Ileum</tissue>
    </source>
</reference>
<protein>
    <recommendedName>
        <fullName>Guanine nucleotide-binding protein subunit alpha-11</fullName>
        <shortName>G alpha-11</shortName>
        <shortName>G-protein subunit alpha-11</shortName>
    </recommendedName>
    <alternativeName>
        <fullName>G-protein subunit GL2 alpha</fullName>
    </alternativeName>
</protein>